<feature type="chain" id="PRO_0000313812" description="Guanylate-binding protein 6">
    <location>
        <begin position="1"/>
        <end position="633"/>
    </location>
</feature>
<feature type="domain" description="GB1/RHD3-type G" evidence="3">
    <location>
        <begin position="35"/>
        <end position="277"/>
    </location>
</feature>
<feature type="region of interest" description="GTPase domain (Globular)" evidence="2">
    <location>
        <begin position="1"/>
        <end position="310"/>
    </location>
</feature>
<feature type="binding site" evidence="2">
    <location>
        <begin position="45"/>
        <end position="52"/>
    </location>
    <ligand>
        <name>GTP</name>
        <dbReference type="ChEBI" id="CHEBI:37565"/>
    </ligand>
</feature>
<feature type="binding site" evidence="2">
    <location>
        <begin position="67"/>
        <end position="69"/>
    </location>
    <ligand>
        <name>GTP</name>
        <dbReference type="ChEBI" id="CHEBI:37565"/>
    </ligand>
</feature>
<feature type="binding site" evidence="2">
    <location>
        <begin position="97"/>
        <end position="101"/>
    </location>
    <ligand>
        <name>GTP</name>
        <dbReference type="ChEBI" id="CHEBI:37565"/>
    </ligand>
</feature>
<evidence type="ECO:0000250" key="1">
    <source>
        <dbReference type="UniProtKB" id="A0A0G2JDV3"/>
    </source>
</evidence>
<evidence type="ECO:0000250" key="2">
    <source>
        <dbReference type="UniProtKB" id="P32455"/>
    </source>
</evidence>
<evidence type="ECO:0000255" key="3">
    <source>
        <dbReference type="PROSITE-ProRule" id="PRU01052"/>
    </source>
</evidence>
<accession>Q5R9T9</accession>
<gene>
    <name type="primary">GBP6</name>
</gene>
<proteinExistence type="evidence at transcript level"/>
<dbReference type="EC" id="3.6.5.-" evidence="2"/>
<dbReference type="EMBL" id="CR859293">
    <property type="protein sequence ID" value="CAH91471.1"/>
    <property type="molecule type" value="mRNA"/>
</dbReference>
<dbReference type="RefSeq" id="NP_001125866.1">
    <property type="nucleotide sequence ID" value="NM_001132394.1"/>
</dbReference>
<dbReference type="SMR" id="Q5R9T9"/>
<dbReference type="FunCoup" id="Q5R9T9">
    <property type="interactions" value="42"/>
</dbReference>
<dbReference type="STRING" id="9601.ENSPPYP00000001356"/>
<dbReference type="GeneID" id="100172797"/>
<dbReference type="KEGG" id="pon:100172797"/>
<dbReference type="CTD" id="163351"/>
<dbReference type="eggNOG" id="KOG2037">
    <property type="taxonomic scope" value="Eukaryota"/>
</dbReference>
<dbReference type="InParanoid" id="Q5R9T9"/>
<dbReference type="OrthoDB" id="2135133at2759"/>
<dbReference type="Proteomes" id="UP000001595">
    <property type="component" value="Unplaced"/>
</dbReference>
<dbReference type="GO" id="GO:0031410">
    <property type="term" value="C:cytoplasmic vesicle"/>
    <property type="evidence" value="ECO:0007669"/>
    <property type="project" value="UniProtKB-KW"/>
</dbReference>
<dbReference type="GO" id="GO:0005525">
    <property type="term" value="F:GTP binding"/>
    <property type="evidence" value="ECO:0007669"/>
    <property type="project" value="UniProtKB-KW"/>
</dbReference>
<dbReference type="GO" id="GO:0003924">
    <property type="term" value="F:GTPase activity"/>
    <property type="evidence" value="ECO:0007669"/>
    <property type="project" value="InterPro"/>
</dbReference>
<dbReference type="GO" id="GO:0071346">
    <property type="term" value="P:cellular response to type II interferon"/>
    <property type="evidence" value="ECO:0000250"/>
    <property type="project" value="CAFA"/>
</dbReference>
<dbReference type="GO" id="GO:0042742">
    <property type="term" value="P:defense response to bacterium"/>
    <property type="evidence" value="ECO:0000250"/>
    <property type="project" value="CAFA"/>
</dbReference>
<dbReference type="GO" id="GO:0006955">
    <property type="term" value="P:immune response"/>
    <property type="evidence" value="ECO:0000250"/>
    <property type="project" value="CAFA"/>
</dbReference>
<dbReference type="CDD" id="cd01851">
    <property type="entry name" value="GBP"/>
    <property type="match status" value="1"/>
</dbReference>
<dbReference type="CDD" id="cd16269">
    <property type="entry name" value="GBP_C"/>
    <property type="match status" value="1"/>
</dbReference>
<dbReference type="FunFam" id="1.20.1000.10:FF:000001">
    <property type="entry name" value="Guanylate binding protein 1"/>
    <property type="match status" value="1"/>
</dbReference>
<dbReference type="FunFam" id="3.40.50.300:FF:000422">
    <property type="entry name" value="Guanylate-binding protein 1"/>
    <property type="match status" value="1"/>
</dbReference>
<dbReference type="Gene3D" id="1.20.1000.10">
    <property type="entry name" value="Guanylate-binding protein, C-terminal domain"/>
    <property type="match status" value="1"/>
</dbReference>
<dbReference type="Gene3D" id="3.40.50.300">
    <property type="entry name" value="P-loop containing nucleotide triphosphate hydrolases"/>
    <property type="match status" value="1"/>
</dbReference>
<dbReference type="InterPro" id="IPR030386">
    <property type="entry name" value="G_GB1_RHD3_dom"/>
</dbReference>
<dbReference type="InterPro" id="IPR037684">
    <property type="entry name" value="GBP_C"/>
</dbReference>
<dbReference type="InterPro" id="IPR003191">
    <property type="entry name" value="Guanylate-bd/ATL_C"/>
</dbReference>
<dbReference type="InterPro" id="IPR036543">
    <property type="entry name" value="Guanylate-bd_C_sf"/>
</dbReference>
<dbReference type="InterPro" id="IPR015894">
    <property type="entry name" value="Guanylate-bd_N"/>
</dbReference>
<dbReference type="InterPro" id="IPR027417">
    <property type="entry name" value="P-loop_NTPase"/>
</dbReference>
<dbReference type="PANTHER" id="PTHR10751">
    <property type="entry name" value="GUANYLATE BINDING PROTEIN"/>
    <property type="match status" value="1"/>
</dbReference>
<dbReference type="Pfam" id="PF02263">
    <property type="entry name" value="GBP"/>
    <property type="match status" value="1"/>
</dbReference>
<dbReference type="Pfam" id="PF02841">
    <property type="entry name" value="GBP_C"/>
    <property type="match status" value="1"/>
</dbReference>
<dbReference type="SUPFAM" id="SSF48340">
    <property type="entry name" value="Interferon-induced guanylate-binding protein 1 (GBP1), C-terminal domain"/>
    <property type="match status" value="1"/>
</dbReference>
<dbReference type="SUPFAM" id="SSF52540">
    <property type="entry name" value="P-loop containing nucleoside triphosphate hydrolases"/>
    <property type="match status" value="1"/>
</dbReference>
<dbReference type="PROSITE" id="PS51715">
    <property type="entry name" value="G_GB1_RHD3"/>
    <property type="match status" value="1"/>
</dbReference>
<sequence length="633" mass="72364">MESGPKMLAPICLVENNNEQLLVNQQAIQILEKISQPVVVVAIVGLYRTGKSYLMNHLAGQNHGFPLGSTVQSETKGIWMWCVPHPSKPNHTLVLLDTEGLGDVEKGDPKNDSWIFALAVLLCSTFIYNSMSTINHQALEQLHYVTELTELIKAKSSPRPDGVDDSTEFVSFFPDFIWTVRDFTLELKLNGHPITEDEYLENALKLIQGNNPRVQTSNLPRECIRRFFPKRKCFIFDRPTNDKDLLANIEKVSEKQLDPKFQEQTNIFSSYIFTHARTKTLREGIIVTGNRLGTLAVTYVEAVNSGAVPCLENAVITLAQRENSAAVQRAADYYSQQMAQRVKFPTDTLQELLDMHAACEREAIAIFMEHSFKDENQEFQKKFMETTMNKKGDFLLQNEESSVQYCQAKLNELSKGLMESISAGSFSVPGGHKLYMETKERIEQDYWQVPRKGVKAKEVFQRFLESQVVIEESILQSDKALTDREKAVAVDRAKKEAAEKEQELLKQKLQEQQQQMEAQDKSLKENIAQLKQKLQMEREQLLREQIMMLEHTQKVQNDWLHEGFKKKYEEMNAEISQFKRMIDITKNDDTPWIARTLDKLADELTAVLSAPAKLIGHGVKGVSSLFKKHKLPF</sequence>
<comment type="function">
    <text evidence="1">Interferon (IFN)-inducible GTPase that plays important roles in innate immunity against a diverse range of bacterial, viral and protozoan pathogens, such as bacterial pathogens Listeria monocytogenes and Mycobacterium bovis BCG as well as the protozoan pathogen Toxoplasma gondii. Confers protection to several pathogens, including the bacterial pathogens Listeria monocytogenes and Mycobacterium bovis BCG as well as the protozoan pathogen Toxoplasma gondii.</text>
</comment>
<comment type="catalytic activity">
    <reaction evidence="2">
        <text>GTP + H2O = GDP + phosphate + H(+)</text>
        <dbReference type="Rhea" id="RHEA:19669"/>
        <dbReference type="ChEBI" id="CHEBI:15377"/>
        <dbReference type="ChEBI" id="CHEBI:15378"/>
        <dbReference type="ChEBI" id="CHEBI:37565"/>
        <dbReference type="ChEBI" id="CHEBI:43474"/>
        <dbReference type="ChEBI" id="CHEBI:58189"/>
    </reaction>
</comment>
<comment type="subcellular location">
    <subcellularLocation>
        <location evidence="1">Cytoplasmic vesicle</location>
    </subcellularLocation>
</comment>
<comment type="similarity">
    <text evidence="3">Belongs to the TRAFAC class dynamin-like GTPase superfamily. GB1/RHD3 GTPase family. GB1 subfamily.</text>
</comment>
<name>GBP6_PONAB</name>
<organism>
    <name type="scientific">Pongo abelii</name>
    <name type="common">Sumatran orangutan</name>
    <name type="synonym">Pongo pygmaeus abelii</name>
    <dbReference type="NCBI Taxonomy" id="9601"/>
    <lineage>
        <taxon>Eukaryota</taxon>
        <taxon>Metazoa</taxon>
        <taxon>Chordata</taxon>
        <taxon>Craniata</taxon>
        <taxon>Vertebrata</taxon>
        <taxon>Euteleostomi</taxon>
        <taxon>Mammalia</taxon>
        <taxon>Eutheria</taxon>
        <taxon>Euarchontoglires</taxon>
        <taxon>Primates</taxon>
        <taxon>Haplorrhini</taxon>
        <taxon>Catarrhini</taxon>
        <taxon>Hominidae</taxon>
        <taxon>Pongo</taxon>
    </lineage>
</organism>
<protein>
    <recommendedName>
        <fullName>Guanylate-binding protein 6</fullName>
        <ecNumber evidence="2">3.6.5.-</ecNumber>
    </recommendedName>
    <alternativeName>
        <fullName>GTP-binding protein 6</fullName>
        <shortName>GBP-6</shortName>
    </alternativeName>
    <alternativeName>
        <fullName>Guanine nucleotide-binding protein 6</fullName>
    </alternativeName>
</protein>
<reference key="1">
    <citation type="submission" date="2004-11" db="EMBL/GenBank/DDBJ databases">
        <authorList>
            <consortium name="The German cDNA consortium"/>
        </authorList>
    </citation>
    <scope>NUCLEOTIDE SEQUENCE [LARGE SCALE MRNA]</scope>
    <source>
        <tissue>Heart</tissue>
    </source>
</reference>
<keyword id="KW-0929">Antimicrobial</keyword>
<keyword id="KW-0968">Cytoplasmic vesicle</keyword>
<keyword id="KW-0342">GTP-binding</keyword>
<keyword id="KW-0378">Hydrolase</keyword>
<keyword id="KW-0391">Immunity</keyword>
<keyword id="KW-0399">Innate immunity</keyword>
<keyword id="KW-0547">Nucleotide-binding</keyword>
<keyword id="KW-1185">Reference proteome</keyword>